<evidence type="ECO:0000250" key="1"/>
<evidence type="ECO:0000250" key="2">
    <source>
        <dbReference type="UniProtKB" id="P54368"/>
    </source>
</evidence>
<evidence type="ECO:0000305" key="3"/>
<comment type="function">
    <text evidence="2">Ornithine decarboxylase (ODC) antizyme protein that negatively regulates ODC activity and intracellular polyamine biosynthesis and uptake in response to increased intracellular polyamine levels. Binds to ODC monomers, inhibiting the assembly of the functional ODC homodimer, and targets the monomers for ubiquitin-independent proteolytic destruction by the 26S proteasome.</text>
</comment>
<comment type="subunit">
    <text evidence="2">Interacts with ODC1 and thereby sterically blocks ODC homodimerization.</text>
</comment>
<comment type="alternative products">
    <event type="ribosomal frameshifting"/>
    <isoform>
        <id>P55814-1</id>
        <name>1</name>
        <sequence type="displayed"/>
    </isoform>
    <text>A ribosomal frameshift occurs between the codons for Ser-58 and Asp-59. An autoregulatory mechanism enables modulation of frameshifting according to the cellular concentration of polyamines.</text>
</comment>
<comment type="similarity">
    <text evidence="3">Belongs to the ODC antizyme family.</text>
</comment>
<protein>
    <recommendedName>
        <fullName>Ornithine decarboxylase antizyme 1</fullName>
        <shortName>ODC-Az</shortName>
    </recommendedName>
</protein>
<reference key="1">
    <citation type="journal article" date="1995" name="Biochim. Biophys. Acta">
        <title>Nucleotide sequence of ornithine decarboxylase antizyme cDNA from Xenopus laevis.</title>
        <authorList>
            <person name="Ichiba T."/>
            <person name="Matsufuji S."/>
            <person name="Miyazaki Y."/>
            <person name="Hayashi S."/>
        </authorList>
    </citation>
    <scope>NUCLEOTIDE SEQUENCE [MRNA]</scope>
</reference>
<organism>
    <name type="scientific">Xenopus laevis</name>
    <name type="common">African clawed frog</name>
    <dbReference type="NCBI Taxonomy" id="8355"/>
    <lineage>
        <taxon>Eukaryota</taxon>
        <taxon>Metazoa</taxon>
        <taxon>Chordata</taxon>
        <taxon>Craniata</taxon>
        <taxon>Vertebrata</taxon>
        <taxon>Euteleostomi</taxon>
        <taxon>Amphibia</taxon>
        <taxon>Batrachia</taxon>
        <taxon>Anura</taxon>
        <taxon>Pipoidea</taxon>
        <taxon>Pipidae</taxon>
        <taxon>Xenopodinae</taxon>
        <taxon>Xenopus</taxon>
        <taxon>Xenopus</taxon>
    </lineage>
</organism>
<proteinExistence type="evidence at transcript level"/>
<feature type="initiator methionine" description="Removed" evidence="1">
    <location>
        <position position="1"/>
    </location>
</feature>
<feature type="chain" id="PRO_0000220856" description="Ornithine decarboxylase antizyme 1">
    <location>
        <begin position="2"/>
        <end position="216"/>
    </location>
</feature>
<keyword id="KW-0620">Polyamine biosynthesis</keyword>
<keyword id="KW-1185">Reference proteome</keyword>
<keyword id="KW-0688">Ribosomal frameshifting</keyword>
<accession>P55814</accession>
<sequence>MVKSSLQRILNSHCFAREKEGNKRNDAMPLLSIPSSSESSRASFNCCSNLGPGPRWCSDVPHPPLKIPGGRGNSQRDHNLSANLFYSDNRLNITEELTSNNRTRILNVQSSLTDGKQVSWRAVLNNNNLYIEIPSGTLPDGSKDSFAILLEYAEEQLQVDHVFICFHKNRDDRAMLLRTFRFLGFEIVIPGHPLVPKRPDACFMAYTFERDSSDED</sequence>
<gene>
    <name type="primary">oaz1</name>
</gene>
<name>OAZ1_XENLA</name>
<dbReference type="EMBL" id="D32141">
    <property type="protein sequence ID" value="BAA06867.1"/>
    <property type="molecule type" value="mRNA"/>
</dbReference>
<dbReference type="PIR" id="S55682">
    <property type="entry name" value="S55682"/>
</dbReference>
<dbReference type="SMR" id="P55814"/>
<dbReference type="AGR" id="Xenbase:XB-GENE-865996"/>
<dbReference type="Xenbase" id="XB-GENE-865996">
    <property type="gene designation" value="oaz1.S"/>
</dbReference>
<dbReference type="Proteomes" id="UP000186698">
    <property type="component" value="Unplaced"/>
</dbReference>
<dbReference type="GO" id="GO:0005737">
    <property type="term" value="C:cytoplasm"/>
    <property type="evidence" value="ECO:0000318"/>
    <property type="project" value="GO_Central"/>
</dbReference>
<dbReference type="GO" id="GO:0005634">
    <property type="term" value="C:nucleus"/>
    <property type="evidence" value="ECO:0000318"/>
    <property type="project" value="GO_Central"/>
</dbReference>
<dbReference type="GO" id="GO:0008073">
    <property type="term" value="F:ornithine decarboxylase inhibitor activity"/>
    <property type="evidence" value="ECO:0000318"/>
    <property type="project" value="GO_Central"/>
</dbReference>
<dbReference type="GO" id="GO:0006596">
    <property type="term" value="P:polyamine biosynthetic process"/>
    <property type="evidence" value="ECO:0007669"/>
    <property type="project" value="UniProtKB-KW"/>
</dbReference>
<dbReference type="GO" id="GO:0090316">
    <property type="term" value="P:positive regulation of intracellular protein transport"/>
    <property type="evidence" value="ECO:0000250"/>
    <property type="project" value="UniProtKB"/>
</dbReference>
<dbReference type="GO" id="GO:0045732">
    <property type="term" value="P:positive regulation of protein catabolic process"/>
    <property type="evidence" value="ECO:0000318"/>
    <property type="project" value="GO_Central"/>
</dbReference>
<dbReference type="GO" id="GO:0075523">
    <property type="term" value="P:viral translational frameshifting"/>
    <property type="evidence" value="ECO:0007669"/>
    <property type="project" value="UniProtKB-KW"/>
</dbReference>
<dbReference type="FunFam" id="3.40.630.60:FF:000001">
    <property type="entry name" value="Ornithine decarboxylase antizyme 1"/>
    <property type="match status" value="1"/>
</dbReference>
<dbReference type="Gene3D" id="3.40.630.60">
    <property type="match status" value="1"/>
</dbReference>
<dbReference type="InterPro" id="IPR016181">
    <property type="entry name" value="Acyl_CoA_acyltransferase"/>
</dbReference>
<dbReference type="InterPro" id="IPR002993">
    <property type="entry name" value="ODC_AZ"/>
</dbReference>
<dbReference type="InterPro" id="IPR038581">
    <property type="entry name" value="ODC_AZ_sf"/>
</dbReference>
<dbReference type="PANTHER" id="PTHR10279">
    <property type="entry name" value="ORNITHINE DECARBOXYLASE ANTIZYME"/>
    <property type="match status" value="1"/>
</dbReference>
<dbReference type="PANTHER" id="PTHR10279:SF8">
    <property type="entry name" value="ORNITHINE DECARBOXYLASE ANTIZYME 1"/>
    <property type="match status" value="1"/>
</dbReference>
<dbReference type="Pfam" id="PF02100">
    <property type="entry name" value="ODC_AZ"/>
    <property type="match status" value="1"/>
</dbReference>
<dbReference type="SUPFAM" id="SSF55729">
    <property type="entry name" value="Acyl-CoA N-acyltransferases (Nat)"/>
    <property type="match status" value="1"/>
</dbReference>
<dbReference type="PROSITE" id="PS01337">
    <property type="entry name" value="ODC_AZ"/>
    <property type="match status" value="1"/>
</dbReference>